<reference key="1">
    <citation type="journal article" date="2001" name="Proc. Natl. Acad. Sci. U.S.A.">
        <title>Complete genome sequence of an M1 strain of Streptococcus pyogenes.</title>
        <authorList>
            <person name="Ferretti J.J."/>
            <person name="McShan W.M."/>
            <person name="Ajdic D.J."/>
            <person name="Savic D.J."/>
            <person name="Savic G."/>
            <person name="Lyon K."/>
            <person name="Primeaux C."/>
            <person name="Sezate S."/>
            <person name="Suvorov A.N."/>
            <person name="Kenton S."/>
            <person name="Lai H.S."/>
            <person name="Lin S.P."/>
            <person name="Qian Y."/>
            <person name="Jia H.G."/>
            <person name="Najar F.Z."/>
            <person name="Ren Q."/>
            <person name="Zhu H."/>
            <person name="Song L."/>
            <person name="White J."/>
            <person name="Yuan X."/>
            <person name="Clifton S.W."/>
            <person name="Roe B.A."/>
            <person name="McLaughlin R.E."/>
        </authorList>
    </citation>
    <scope>NUCLEOTIDE SEQUENCE [LARGE SCALE GENOMIC DNA]</scope>
    <source>
        <strain>ATCC 700294 / SF370 / Serotype M1</strain>
    </source>
</reference>
<reference key="2">
    <citation type="journal article" date="2005" name="J. Infect. Dis.">
        <title>Evolutionary origin and emergence of a highly successful clone of serotype M1 group A Streptococcus involved multiple horizontal gene transfer events.</title>
        <authorList>
            <person name="Sumby P."/>
            <person name="Porcella S.F."/>
            <person name="Madrigal A.G."/>
            <person name="Barbian K.D."/>
            <person name="Virtaneva K."/>
            <person name="Ricklefs S.M."/>
            <person name="Sturdevant D.E."/>
            <person name="Graham M.R."/>
            <person name="Vuopio-Varkila J."/>
            <person name="Hoe N.P."/>
            <person name="Musser J.M."/>
        </authorList>
    </citation>
    <scope>NUCLEOTIDE SEQUENCE [LARGE SCALE GENOMIC DNA]</scope>
    <source>
        <strain>ATCC BAA-947 / MGAS5005 / Serotype M1</strain>
    </source>
</reference>
<proteinExistence type="inferred from homology"/>
<name>SYC_STRP1</name>
<accession>Q99XZ9</accession>
<accession>Q48WK2</accession>
<sequence>MIKIYDTMTRSLRKFVPLTENTVNIYVCGPTVYNYIHIGNARSAVAFDTIRRYFEYTGYQVNYISNFTDVDDKIIKAATQAGVSPKELSDRFIAAFIEDTKALGVKPATQNPRVMDYIAEIISFVESLIEKDFAYEADGDVYFRVEKSEHYAKLANKTLSELEVGASGRTDAETALKENPLDFALWKSAKAGEVSWDSPWGFGRPGWHIECSVMATEILGDTIDIHGGGADLEFPHHTNEIAQSEAKTGKTFANYWMHNGFVTVDNEKMSKSLGNFVTVHDMLQTVDGQVLRFFLATQQYRKPINFTEKTIHDAEINLKYLKNTLQQPLTETADEQELKQFVIAFQDAMDDDFNTANGITVVFDMAKWINSGSYTEPVKSAFEKMLAVFGIIFEEEVLEVDIEALIAKRQEARANRDFATADAIRDQLAVQGIKLLDTKDGVRWLRD</sequence>
<dbReference type="EC" id="6.1.1.16" evidence="1"/>
<dbReference type="EMBL" id="AE004092">
    <property type="protein sequence ID" value="AAK34639.1"/>
    <property type="molecule type" value="Genomic_DNA"/>
</dbReference>
<dbReference type="EMBL" id="CP000017">
    <property type="protein sequence ID" value="AAZ52273.1"/>
    <property type="molecule type" value="Genomic_DNA"/>
</dbReference>
<dbReference type="RefSeq" id="NP_269918.1">
    <property type="nucleotide sequence ID" value="NC_002737.2"/>
</dbReference>
<dbReference type="SMR" id="Q99XZ9"/>
<dbReference type="PaxDb" id="1314-HKU360_01775"/>
<dbReference type="KEGG" id="spy:SPy_1941"/>
<dbReference type="KEGG" id="spz:M5005_Spy1655"/>
<dbReference type="PATRIC" id="fig|160490.10.peg.1688"/>
<dbReference type="HOGENOM" id="CLU_013528_0_1_9"/>
<dbReference type="OMA" id="IMRWPSP"/>
<dbReference type="Proteomes" id="UP000000750">
    <property type="component" value="Chromosome"/>
</dbReference>
<dbReference type="GO" id="GO:0005829">
    <property type="term" value="C:cytosol"/>
    <property type="evidence" value="ECO:0007669"/>
    <property type="project" value="TreeGrafter"/>
</dbReference>
<dbReference type="GO" id="GO:0005524">
    <property type="term" value="F:ATP binding"/>
    <property type="evidence" value="ECO:0007669"/>
    <property type="project" value="UniProtKB-UniRule"/>
</dbReference>
<dbReference type="GO" id="GO:0004817">
    <property type="term" value="F:cysteine-tRNA ligase activity"/>
    <property type="evidence" value="ECO:0007669"/>
    <property type="project" value="UniProtKB-UniRule"/>
</dbReference>
<dbReference type="GO" id="GO:0008270">
    <property type="term" value="F:zinc ion binding"/>
    <property type="evidence" value="ECO:0007669"/>
    <property type="project" value="UniProtKB-UniRule"/>
</dbReference>
<dbReference type="GO" id="GO:0006423">
    <property type="term" value="P:cysteinyl-tRNA aminoacylation"/>
    <property type="evidence" value="ECO:0007669"/>
    <property type="project" value="UniProtKB-UniRule"/>
</dbReference>
<dbReference type="CDD" id="cd00672">
    <property type="entry name" value="CysRS_core"/>
    <property type="match status" value="1"/>
</dbReference>
<dbReference type="FunFam" id="3.40.50.620:FF:000130">
    <property type="entry name" value="Cysteine--tRNA ligase"/>
    <property type="match status" value="1"/>
</dbReference>
<dbReference type="Gene3D" id="1.20.120.640">
    <property type="entry name" value="Anticodon-binding domain of a subclass of class I aminoacyl-tRNA synthetases"/>
    <property type="match status" value="1"/>
</dbReference>
<dbReference type="Gene3D" id="3.40.50.620">
    <property type="entry name" value="HUPs"/>
    <property type="match status" value="1"/>
</dbReference>
<dbReference type="HAMAP" id="MF_00041">
    <property type="entry name" value="Cys_tRNA_synth"/>
    <property type="match status" value="1"/>
</dbReference>
<dbReference type="InterPro" id="IPR015803">
    <property type="entry name" value="Cys-tRNA-ligase"/>
</dbReference>
<dbReference type="InterPro" id="IPR015273">
    <property type="entry name" value="Cys-tRNA-synt_Ia_DALR"/>
</dbReference>
<dbReference type="InterPro" id="IPR024909">
    <property type="entry name" value="Cys-tRNA/MSH_ligase"/>
</dbReference>
<dbReference type="InterPro" id="IPR056411">
    <property type="entry name" value="CysS_C"/>
</dbReference>
<dbReference type="InterPro" id="IPR014729">
    <property type="entry name" value="Rossmann-like_a/b/a_fold"/>
</dbReference>
<dbReference type="InterPro" id="IPR032678">
    <property type="entry name" value="tRNA-synt_1_cat_dom"/>
</dbReference>
<dbReference type="InterPro" id="IPR009080">
    <property type="entry name" value="tRNAsynth_Ia_anticodon-bd"/>
</dbReference>
<dbReference type="NCBIfam" id="TIGR00435">
    <property type="entry name" value="cysS"/>
    <property type="match status" value="1"/>
</dbReference>
<dbReference type="PANTHER" id="PTHR10890:SF3">
    <property type="entry name" value="CYSTEINE--TRNA LIGASE, CYTOPLASMIC"/>
    <property type="match status" value="1"/>
</dbReference>
<dbReference type="PANTHER" id="PTHR10890">
    <property type="entry name" value="CYSTEINYL-TRNA SYNTHETASE"/>
    <property type="match status" value="1"/>
</dbReference>
<dbReference type="Pfam" id="PF23493">
    <property type="entry name" value="CysS_C"/>
    <property type="match status" value="1"/>
</dbReference>
<dbReference type="Pfam" id="PF09190">
    <property type="entry name" value="DALR_2"/>
    <property type="match status" value="1"/>
</dbReference>
<dbReference type="Pfam" id="PF01406">
    <property type="entry name" value="tRNA-synt_1e"/>
    <property type="match status" value="1"/>
</dbReference>
<dbReference type="PRINTS" id="PR00983">
    <property type="entry name" value="TRNASYNTHCYS"/>
</dbReference>
<dbReference type="SMART" id="SM00840">
    <property type="entry name" value="DALR_2"/>
    <property type="match status" value="1"/>
</dbReference>
<dbReference type="SUPFAM" id="SSF47323">
    <property type="entry name" value="Anticodon-binding domain of a subclass of class I aminoacyl-tRNA synthetases"/>
    <property type="match status" value="1"/>
</dbReference>
<dbReference type="SUPFAM" id="SSF52374">
    <property type="entry name" value="Nucleotidylyl transferase"/>
    <property type="match status" value="1"/>
</dbReference>
<comment type="catalytic activity">
    <reaction evidence="1">
        <text>tRNA(Cys) + L-cysteine + ATP = L-cysteinyl-tRNA(Cys) + AMP + diphosphate</text>
        <dbReference type="Rhea" id="RHEA:17773"/>
        <dbReference type="Rhea" id="RHEA-COMP:9661"/>
        <dbReference type="Rhea" id="RHEA-COMP:9679"/>
        <dbReference type="ChEBI" id="CHEBI:30616"/>
        <dbReference type="ChEBI" id="CHEBI:33019"/>
        <dbReference type="ChEBI" id="CHEBI:35235"/>
        <dbReference type="ChEBI" id="CHEBI:78442"/>
        <dbReference type="ChEBI" id="CHEBI:78517"/>
        <dbReference type="ChEBI" id="CHEBI:456215"/>
        <dbReference type="EC" id="6.1.1.16"/>
    </reaction>
</comment>
<comment type="cofactor">
    <cofactor evidence="1">
        <name>Zn(2+)</name>
        <dbReference type="ChEBI" id="CHEBI:29105"/>
    </cofactor>
    <text evidence="1">Binds 1 zinc ion per subunit.</text>
</comment>
<comment type="subunit">
    <text evidence="1">Monomer.</text>
</comment>
<comment type="subcellular location">
    <subcellularLocation>
        <location evidence="1">Cytoplasm</location>
    </subcellularLocation>
</comment>
<comment type="similarity">
    <text evidence="1">Belongs to the class-I aminoacyl-tRNA synthetase family.</text>
</comment>
<feature type="chain" id="PRO_0000159495" description="Cysteine--tRNA ligase">
    <location>
        <begin position="1"/>
        <end position="447"/>
    </location>
</feature>
<feature type="short sequence motif" description="'HIGH' region">
    <location>
        <begin position="30"/>
        <end position="40"/>
    </location>
</feature>
<feature type="short sequence motif" description="'KMSKS' region">
    <location>
        <begin position="268"/>
        <end position="272"/>
    </location>
</feature>
<feature type="binding site" evidence="1">
    <location>
        <position position="28"/>
    </location>
    <ligand>
        <name>Zn(2+)</name>
        <dbReference type="ChEBI" id="CHEBI:29105"/>
    </ligand>
</feature>
<feature type="binding site" evidence="1">
    <location>
        <position position="211"/>
    </location>
    <ligand>
        <name>Zn(2+)</name>
        <dbReference type="ChEBI" id="CHEBI:29105"/>
    </ligand>
</feature>
<feature type="binding site" evidence="1">
    <location>
        <position position="236"/>
    </location>
    <ligand>
        <name>Zn(2+)</name>
        <dbReference type="ChEBI" id="CHEBI:29105"/>
    </ligand>
</feature>
<feature type="binding site" evidence="1">
    <location>
        <position position="240"/>
    </location>
    <ligand>
        <name>Zn(2+)</name>
        <dbReference type="ChEBI" id="CHEBI:29105"/>
    </ligand>
</feature>
<feature type="binding site" evidence="1">
    <location>
        <position position="271"/>
    </location>
    <ligand>
        <name>ATP</name>
        <dbReference type="ChEBI" id="CHEBI:30616"/>
    </ligand>
</feature>
<keyword id="KW-0030">Aminoacyl-tRNA synthetase</keyword>
<keyword id="KW-0067">ATP-binding</keyword>
<keyword id="KW-0963">Cytoplasm</keyword>
<keyword id="KW-0436">Ligase</keyword>
<keyword id="KW-0479">Metal-binding</keyword>
<keyword id="KW-0547">Nucleotide-binding</keyword>
<keyword id="KW-0648">Protein biosynthesis</keyword>
<keyword id="KW-1185">Reference proteome</keyword>
<keyword id="KW-0862">Zinc</keyword>
<protein>
    <recommendedName>
        <fullName evidence="1">Cysteine--tRNA ligase</fullName>
        <ecNumber evidence="1">6.1.1.16</ecNumber>
    </recommendedName>
    <alternativeName>
        <fullName evidence="1">Cysteinyl-tRNA synthetase</fullName>
        <shortName evidence="1">CysRS</shortName>
    </alternativeName>
</protein>
<gene>
    <name evidence="1" type="primary">cysS</name>
    <name type="ordered locus">SPy_1941</name>
    <name type="ordered locus">M5005_Spy1655</name>
</gene>
<evidence type="ECO:0000255" key="1">
    <source>
        <dbReference type="HAMAP-Rule" id="MF_00041"/>
    </source>
</evidence>
<organism>
    <name type="scientific">Streptococcus pyogenes serotype M1</name>
    <dbReference type="NCBI Taxonomy" id="301447"/>
    <lineage>
        <taxon>Bacteria</taxon>
        <taxon>Bacillati</taxon>
        <taxon>Bacillota</taxon>
        <taxon>Bacilli</taxon>
        <taxon>Lactobacillales</taxon>
        <taxon>Streptococcaceae</taxon>
        <taxon>Streptococcus</taxon>
    </lineage>
</organism>